<protein>
    <recommendedName>
        <fullName evidence="1">2-keto-4-pentenoate hydratase</fullName>
        <ecNumber evidence="1">4.2.1.80</ecNumber>
    </recommendedName>
    <alternativeName>
        <fullName evidence="1">2-hydroxypentadienoic acid hydratase</fullName>
    </alternativeName>
</protein>
<evidence type="ECO:0000255" key="1">
    <source>
        <dbReference type="HAMAP-Rule" id="MF_01655"/>
    </source>
</evidence>
<evidence type="ECO:0000305" key="2"/>
<proteinExistence type="inferred from homology"/>
<dbReference type="EC" id="4.2.1.80" evidence="1"/>
<dbReference type="EMBL" id="CP000038">
    <property type="protein sequence ID" value="AAZ87106.1"/>
    <property type="status" value="ALT_INIT"/>
    <property type="molecule type" value="Genomic_DNA"/>
</dbReference>
<dbReference type="RefSeq" id="WP_000160704.1">
    <property type="nucleotide sequence ID" value="NC_007384.1"/>
</dbReference>
<dbReference type="SMR" id="Q3Z556"/>
<dbReference type="GeneID" id="93777105"/>
<dbReference type="KEGG" id="ssn:SSON_0329"/>
<dbReference type="HOGENOM" id="CLU_060136_4_1_6"/>
<dbReference type="UniPathway" id="UPA00714"/>
<dbReference type="Proteomes" id="UP000002529">
    <property type="component" value="Chromosome"/>
</dbReference>
<dbReference type="GO" id="GO:0005737">
    <property type="term" value="C:cytoplasm"/>
    <property type="evidence" value="ECO:0007669"/>
    <property type="project" value="TreeGrafter"/>
</dbReference>
<dbReference type="GO" id="GO:0008684">
    <property type="term" value="F:2-oxopent-4-enoate hydratase activity"/>
    <property type="evidence" value="ECO:0007669"/>
    <property type="project" value="UniProtKB-UniRule"/>
</dbReference>
<dbReference type="GO" id="GO:0030145">
    <property type="term" value="F:manganese ion binding"/>
    <property type="evidence" value="ECO:0007669"/>
    <property type="project" value="InterPro"/>
</dbReference>
<dbReference type="GO" id="GO:0019380">
    <property type="term" value="P:3-phenylpropionate catabolic process"/>
    <property type="evidence" value="ECO:0007669"/>
    <property type="project" value="UniProtKB-UniRule"/>
</dbReference>
<dbReference type="FunFam" id="3.90.850.10:FF:000006">
    <property type="entry name" value="2-keto-4-pentenoate hydratase"/>
    <property type="match status" value="1"/>
</dbReference>
<dbReference type="Gene3D" id="3.90.850.10">
    <property type="entry name" value="Fumarylacetoacetase-like, C-terminal domain"/>
    <property type="match status" value="1"/>
</dbReference>
<dbReference type="HAMAP" id="MF_01655">
    <property type="entry name" value="MhpD"/>
    <property type="match status" value="1"/>
</dbReference>
<dbReference type="InterPro" id="IPR011234">
    <property type="entry name" value="Fumarylacetoacetase-like_C"/>
</dbReference>
<dbReference type="InterPro" id="IPR036663">
    <property type="entry name" value="Fumarylacetoacetase_C_sf"/>
</dbReference>
<dbReference type="InterPro" id="IPR050772">
    <property type="entry name" value="Hydratase-Decarb/MhpD_sf"/>
</dbReference>
<dbReference type="InterPro" id="IPR023793">
    <property type="entry name" value="Keto_pentenoate-hydratase"/>
</dbReference>
<dbReference type="NCBIfam" id="NF008461">
    <property type="entry name" value="PRK11342.1"/>
    <property type="match status" value="1"/>
</dbReference>
<dbReference type="PANTHER" id="PTHR30143:SF0">
    <property type="entry name" value="2-KETO-4-PENTENOATE HYDRATASE"/>
    <property type="match status" value="1"/>
</dbReference>
<dbReference type="PANTHER" id="PTHR30143">
    <property type="entry name" value="ACID HYDRATASE"/>
    <property type="match status" value="1"/>
</dbReference>
<dbReference type="Pfam" id="PF01557">
    <property type="entry name" value="FAA_hydrolase"/>
    <property type="match status" value="1"/>
</dbReference>
<dbReference type="SUPFAM" id="SSF56529">
    <property type="entry name" value="FAH"/>
    <property type="match status" value="1"/>
</dbReference>
<keyword id="KW-0058">Aromatic hydrocarbons catabolism</keyword>
<keyword id="KW-0456">Lyase</keyword>
<keyword id="KW-1185">Reference proteome</keyword>
<accession>Q3Z556</accession>
<reference key="1">
    <citation type="journal article" date="2005" name="Nucleic Acids Res.">
        <title>Genome dynamics and diversity of Shigella species, the etiologic agents of bacillary dysentery.</title>
        <authorList>
            <person name="Yang F."/>
            <person name="Yang J."/>
            <person name="Zhang X."/>
            <person name="Chen L."/>
            <person name="Jiang Y."/>
            <person name="Yan Y."/>
            <person name="Tang X."/>
            <person name="Wang J."/>
            <person name="Xiong Z."/>
            <person name="Dong J."/>
            <person name="Xue Y."/>
            <person name="Zhu Y."/>
            <person name="Xu X."/>
            <person name="Sun L."/>
            <person name="Chen S."/>
            <person name="Nie H."/>
            <person name="Peng J."/>
            <person name="Xu J."/>
            <person name="Wang Y."/>
            <person name="Yuan Z."/>
            <person name="Wen Y."/>
            <person name="Yao Z."/>
            <person name="Shen Y."/>
            <person name="Qiang B."/>
            <person name="Hou Y."/>
            <person name="Yu J."/>
            <person name="Jin Q."/>
        </authorList>
    </citation>
    <scope>NUCLEOTIDE SEQUENCE [LARGE SCALE GENOMIC DNA]</scope>
    <source>
        <strain>Ss046</strain>
    </source>
</reference>
<comment type="function">
    <text evidence="1">Catalyzes the conversion of 2-hydroxypentadienoic acid (enolic form of 2-oxopent-4-enoate) to 4-hydroxy-2-ketopentanoic acid.</text>
</comment>
<comment type="catalytic activity">
    <reaction evidence="1">
        <text>(S)-4-hydroxy-2-oxopentanoate = (2Z)-2-hydroxypenta-2,4-dienoate + H2O</text>
        <dbReference type="Rhea" id="RHEA:22580"/>
        <dbReference type="ChEBI" id="CHEBI:15377"/>
        <dbReference type="ChEBI" id="CHEBI:67152"/>
        <dbReference type="ChEBI" id="CHEBI:73143"/>
        <dbReference type="EC" id="4.2.1.80"/>
    </reaction>
</comment>
<comment type="cofactor">
    <cofactor evidence="1">
        <name>a divalent metal cation</name>
        <dbReference type="ChEBI" id="CHEBI:60240"/>
    </cofactor>
</comment>
<comment type="pathway">
    <text evidence="1">Aromatic compound metabolism; 3-phenylpropanoate degradation.</text>
</comment>
<comment type="similarity">
    <text evidence="1">Belongs to the hydratase/decarboxylase family. MhpD subfamily.</text>
</comment>
<comment type="sequence caution" evidence="2">
    <conflict type="erroneous initiation">
        <sequence resource="EMBL-CDS" id="AAZ87106"/>
    </conflict>
</comment>
<feature type="chain" id="PRO_0000337800" description="2-keto-4-pentenoate hydratase">
    <location>
        <begin position="1"/>
        <end position="269"/>
    </location>
</feature>
<sequence length="269" mass="28937">MTKHTLEQLAADLRRAAEQGEAIAPLRDLIGIDHAEAAYAIQHINVQYDVVQGRRVVGRKVGLTHPKVQQQLGVDQPDFGTLFADMCYGDNEIIPFSRVLQPRIEAEIALVLNRDLPATDITFDELYNAIEWVLPALEVVGSRIRDWSIQFVDTVADNASCGVYVIGGPAQRPAGLDLKNCAMKMTRNNEEVSSGRGSECLGHPLNAAVWLARKMASLGEPLRAGDIILTGALGPMVAVNAGDRFEAHIEGIGSVAATFSSAAPKGSLS</sequence>
<name>MHPD_SHISS</name>
<organism>
    <name type="scientific">Shigella sonnei (strain Ss046)</name>
    <dbReference type="NCBI Taxonomy" id="300269"/>
    <lineage>
        <taxon>Bacteria</taxon>
        <taxon>Pseudomonadati</taxon>
        <taxon>Pseudomonadota</taxon>
        <taxon>Gammaproteobacteria</taxon>
        <taxon>Enterobacterales</taxon>
        <taxon>Enterobacteriaceae</taxon>
        <taxon>Shigella</taxon>
    </lineage>
</organism>
<gene>
    <name evidence="1" type="primary">mhpD</name>
    <name type="ordered locus">SSON_0329</name>
</gene>